<keyword id="KW-0029">Amino-acid transport</keyword>
<keyword id="KW-1003">Cell membrane</keyword>
<keyword id="KW-0472">Membrane</keyword>
<keyword id="KW-0769">Symport</keyword>
<keyword id="KW-0812">Transmembrane</keyword>
<keyword id="KW-1133">Transmembrane helix</keyword>
<keyword id="KW-0813">Transport</keyword>
<protein>
    <recommendedName>
        <fullName evidence="1">Serine/threonine transporter SstT</fullName>
    </recommendedName>
    <alternativeName>
        <fullName evidence="1">Na(+)/serine-threonine symporter</fullName>
    </alternativeName>
</protein>
<name>SSTT_STRP6</name>
<feature type="chain" id="PRO_0000309146" description="Serine/threonine transporter SstT">
    <location>
        <begin position="1"/>
        <end position="404"/>
    </location>
</feature>
<feature type="transmembrane region" description="Helical" evidence="1">
    <location>
        <begin position="17"/>
        <end position="37"/>
    </location>
</feature>
<feature type="transmembrane region" description="Helical" evidence="1">
    <location>
        <begin position="39"/>
        <end position="59"/>
    </location>
</feature>
<feature type="transmembrane region" description="Helical" evidence="1">
    <location>
        <begin position="75"/>
        <end position="95"/>
    </location>
</feature>
<feature type="transmembrane region" description="Helical" evidence="1">
    <location>
        <begin position="138"/>
        <end position="158"/>
    </location>
</feature>
<feature type="transmembrane region" description="Helical" evidence="1">
    <location>
        <begin position="179"/>
        <end position="199"/>
    </location>
</feature>
<feature type="transmembrane region" description="Helical" evidence="1">
    <location>
        <begin position="212"/>
        <end position="232"/>
    </location>
</feature>
<feature type="transmembrane region" description="Helical" evidence="1">
    <location>
        <begin position="287"/>
        <end position="307"/>
    </location>
</feature>
<feature type="transmembrane region" description="Helical" evidence="1">
    <location>
        <begin position="313"/>
        <end position="333"/>
    </location>
</feature>
<dbReference type="EMBL" id="CP000003">
    <property type="protein sequence ID" value="AAT86438.1"/>
    <property type="molecule type" value="Genomic_DNA"/>
</dbReference>
<dbReference type="RefSeq" id="WP_002985964.1">
    <property type="nucleotide sequence ID" value="NC_006086.1"/>
</dbReference>
<dbReference type="SMR" id="Q5XDS5"/>
<dbReference type="KEGG" id="spa:M6_Spy0303"/>
<dbReference type="HOGENOM" id="CLU_044581_0_0_9"/>
<dbReference type="Proteomes" id="UP000001167">
    <property type="component" value="Chromosome"/>
</dbReference>
<dbReference type="GO" id="GO:0005886">
    <property type="term" value="C:plasma membrane"/>
    <property type="evidence" value="ECO:0007669"/>
    <property type="project" value="UniProtKB-SubCell"/>
</dbReference>
<dbReference type="GO" id="GO:0005295">
    <property type="term" value="F:neutral L-amino acid:sodium symporter activity"/>
    <property type="evidence" value="ECO:0007669"/>
    <property type="project" value="TreeGrafter"/>
</dbReference>
<dbReference type="GO" id="GO:0032329">
    <property type="term" value="P:serine transport"/>
    <property type="evidence" value="ECO:0007669"/>
    <property type="project" value="InterPro"/>
</dbReference>
<dbReference type="GO" id="GO:0015826">
    <property type="term" value="P:threonine transport"/>
    <property type="evidence" value="ECO:0007669"/>
    <property type="project" value="InterPro"/>
</dbReference>
<dbReference type="FunFam" id="1.10.3860.10:FF:000003">
    <property type="entry name" value="Serine/threonine transporter sstT"/>
    <property type="match status" value="1"/>
</dbReference>
<dbReference type="Gene3D" id="1.10.3860.10">
    <property type="entry name" value="Sodium:dicarboxylate symporter"/>
    <property type="match status" value="1"/>
</dbReference>
<dbReference type="HAMAP" id="MF_01582">
    <property type="entry name" value="Ser_Thr_transp_SstT"/>
    <property type="match status" value="1"/>
</dbReference>
<dbReference type="InterPro" id="IPR001991">
    <property type="entry name" value="Na-dicarboxylate_symporter"/>
</dbReference>
<dbReference type="InterPro" id="IPR036458">
    <property type="entry name" value="Na:dicarbo_symporter_sf"/>
</dbReference>
<dbReference type="InterPro" id="IPR023025">
    <property type="entry name" value="Ser_Thr_transp_SstT"/>
</dbReference>
<dbReference type="NCBIfam" id="NF010151">
    <property type="entry name" value="PRK13628.1"/>
    <property type="match status" value="1"/>
</dbReference>
<dbReference type="PANTHER" id="PTHR42865">
    <property type="entry name" value="PROTON/GLUTAMATE-ASPARTATE SYMPORTER"/>
    <property type="match status" value="1"/>
</dbReference>
<dbReference type="PANTHER" id="PTHR42865:SF8">
    <property type="entry name" value="SERINE_THREONINE TRANSPORTER SSTT"/>
    <property type="match status" value="1"/>
</dbReference>
<dbReference type="Pfam" id="PF00375">
    <property type="entry name" value="SDF"/>
    <property type="match status" value="1"/>
</dbReference>
<dbReference type="PRINTS" id="PR00173">
    <property type="entry name" value="EDTRNSPORT"/>
</dbReference>
<dbReference type="SUPFAM" id="SSF118215">
    <property type="entry name" value="Proton glutamate symport protein"/>
    <property type="match status" value="1"/>
</dbReference>
<proteinExistence type="inferred from homology"/>
<reference key="1">
    <citation type="journal article" date="2004" name="J. Infect. Dis.">
        <title>Progress toward characterization of the group A Streptococcus metagenome: complete genome sequence of a macrolide-resistant serotype M6 strain.</title>
        <authorList>
            <person name="Banks D.J."/>
            <person name="Porcella S.F."/>
            <person name="Barbian K.D."/>
            <person name="Beres S.B."/>
            <person name="Philips L.E."/>
            <person name="Voyich J.M."/>
            <person name="DeLeo F.R."/>
            <person name="Martin J.M."/>
            <person name="Somerville G.A."/>
            <person name="Musser J.M."/>
        </authorList>
    </citation>
    <scope>NUCLEOTIDE SEQUENCE [LARGE SCALE GENOMIC DNA]</scope>
    <source>
        <strain>ATCC BAA-946 / MGAS10394</strain>
    </source>
</reference>
<evidence type="ECO:0000255" key="1">
    <source>
        <dbReference type="HAMAP-Rule" id="MF_01582"/>
    </source>
</evidence>
<organism>
    <name type="scientific">Streptococcus pyogenes serotype M6 (strain ATCC BAA-946 / MGAS10394)</name>
    <dbReference type="NCBI Taxonomy" id="286636"/>
    <lineage>
        <taxon>Bacteria</taxon>
        <taxon>Bacillati</taxon>
        <taxon>Bacillota</taxon>
        <taxon>Bacilli</taxon>
        <taxon>Lactobacillales</taxon>
        <taxon>Streptococcaceae</taxon>
        <taxon>Streptococcus</taxon>
    </lineage>
</organism>
<gene>
    <name evidence="1" type="primary">sstT</name>
    <name type="ordered locus">M6_Spy0303</name>
</gene>
<accession>Q5XDS5</accession>
<comment type="function">
    <text evidence="1">Involved in the import of serine and threonine into the cell, with the concomitant import of sodium (symport system).</text>
</comment>
<comment type="catalytic activity">
    <reaction evidence="1">
        <text>L-serine(in) + Na(+)(in) = L-serine(out) + Na(+)(out)</text>
        <dbReference type="Rhea" id="RHEA:29575"/>
        <dbReference type="ChEBI" id="CHEBI:29101"/>
        <dbReference type="ChEBI" id="CHEBI:33384"/>
    </reaction>
    <physiologicalReaction direction="right-to-left" evidence="1">
        <dbReference type="Rhea" id="RHEA:29577"/>
    </physiologicalReaction>
</comment>
<comment type="catalytic activity">
    <reaction evidence="1">
        <text>L-threonine(in) + Na(+)(in) = L-threonine(out) + Na(+)(out)</text>
        <dbReference type="Rhea" id="RHEA:69999"/>
        <dbReference type="ChEBI" id="CHEBI:29101"/>
        <dbReference type="ChEBI" id="CHEBI:57926"/>
    </reaction>
    <physiologicalReaction direction="right-to-left" evidence="1">
        <dbReference type="Rhea" id="RHEA:70001"/>
    </physiologicalReaction>
</comment>
<comment type="subcellular location">
    <subcellularLocation>
        <location evidence="1">Cell membrane</location>
        <topology evidence="1">Multi-pass membrane protein</topology>
    </subcellularLocation>
</comment>
<comment type="similarity">
    <text evidence="1">Belongs to the dicarboxylate/amino acid:cation symporter (DAACS) (TC 2.A.23) family.</text>
</comment>
<sequence length="404" mass="42616">MKKIYDLWVRVSLIKKIGIGVVIGVMLGILAPDLTGFSILGKLFVGGLKAIAPLLVFALVSQAISHQKKGRQTNMTLIIFLYLFGTFASALVAVLTAYLFPLTLVLNTPVNTELSPPQGVAEVFQSLLLKLVDNPINALATANYIGVLSWAIIFGLALKAASQETKHLIKTAAEVTSQIVVWIINLAPIGIMSLVFTTISENGVGILSDYAFLILVLVGTMVFVALVVNPLIAVLITRQNPYPLVLRCLRESGLTAFFTRSSAANIPVNMQLCQKIGLSKDTYSVSIPLGATINMGGAAITINVLTLAAVHTFGIPIDFLTALLLSVVAAVSACGASGVAGGSLLLIPVACSLFGISNDLAMQVVGVGFIVGVIQDSCETALNSSTDVLFTAIAENAFWKRKKA</sequence>